<proteinExistence type="evidence at protein level"/>
<name>TX10C_MANRB</name>
<organism evidence="7">
    <name type="scientific">Manica rubida</name>
    <name type="common">European giant red ant</name>
    <dbReference type="NCBI Taxonomy" id="219785"/>
    <lineage>
        <taxon>Eukaryota</taxon>
        <taxon>Metazoa</taxon>
        <taxon>Ecdysozoa</taxon>
        <taxon>Arthropoda</taxon>
        <taxon>Hexapoda</taxon>
        <taxon>Insecta</taxon>
        <taxon>Pterygota</taxon>
        <taxon>Neoptera</taxon>
        <taxon>Endopterygota</taxon>
        <taxon>Hymenoptera</taxon>
        <taxon>Apocrita</taxon>
        <taxon>Aculeata</taxon>
        <taxon>Formicoidea</taxon>
        <taxon>Formicidae</taxon>
        <taxon>Myrmicinae</taxon>
        <taxon>Manica</taxon>
    </lineage>
</organism>
<dbReference type="EMBL" id="MN765035">
    <property type="protein sequence ID" value="QIQ51445.1"/>
    <property type="molecule type" value="mRNA"/>
</dbReference>
<dbReference type="GO" id="GO:0005576">
    <property type="term" value="C:extracellular region"/>
    <property type="evidence" value="ECO:0000314"/>
    <property type="project" value="UniProtKB"/>
</dbReference>
<dbReference type="GO" id="GO:0090729">
    <property type="term" value="F:toxin activity"/>
    <property type="evidence" value="ECO:0000314"/>
    <property type="project" value="UniProtKB"/>
</dbReference>
<dbReference type="GO" id="GO:0044616">
    <property type="term" value="P:venom-mediated paralysis in another organism"/>
    <property type="evidence" value="ECO:0000314"/>
    <property type="project" value="UniProtKB"/>
</dbReference>
<dbReference type="InterPro" id="IPR049518">
    <property type="entry name" value="Pilosulin"/>
</dbReference>
<dbReference type="Pfam" id="PF17499">
    <property type="entry name" value="Pilosulin"/>
    <property type="match status" value="1"/>
</dbReference>
<accession>A0A6G9KHD6</accession>
<sequence>MRLSYVSLTLAIIFVMAIVHAPETEAKAYPEADAVGEASAVGEADAVGVADPGVGSLLAKAALKILKIVAPAAAEVIANKIG</sequence>
<keyword id="KW-0027">Amidation</keyword>
<keyword id="KW-0929">Antimicrobial</keyword>
<keyword id="KW-0964">Secreted</keyword>
<keyword id="KW-0732">Signal</keyword>
<keyword id="KW-0800">Toxin</keyword>
<reference evidence="7" key="1">
    <citation type="journal article" date="2020" name="J. Proteome Res.">
        <title>Venom Peptide Repertoire of the European Myrmicine Ant Manica rubida: Identification of Insecticidal Toxins.</title>
        <authorList>
            <person name="Touchard A."/>
            <person name="Aili S.R."/>
            <person name="Tene N."/>
            <person name="Barasse V."/>
            <person name="Klopp C."/>
            <person name="Dejean A."/>
            <person name="Kini R.M."/>
            <person name="Mrinalini X."/>
            <person name="Coquet L."/>
            <person name="Jouenne T."/>
            <person name="Lefranc B."/>
            <person name="Leprince J."/>
            <person name="Escoubas P."/>
            <person name="Nicholson G.M."/>
            <person name="Treilhou M."/>
            <person name="Bonnafe E."/>
        </authorList>
    </citation>
    <scope>NUCLEOTIDE SEQUENCE [MRNA]</scope>
    <scope>FUNCTION</scope>
    <scope>SUBCELLULAR LOCATION</scope>
    <scope>TISSUE SPECIFICITY</scope>
    <scope>TOXIC DOSE</scope>
    <scope>MASS SPECTROMETRY</scope>
    <scope>AMIDATION AT ILE-81</scope>
    <source>
        <tissue evidence="7">Venom gland</tissue>
    </source>
</reference>
<comment type="function">
    <text evidence="1 3">Induces paralysis 5 minutes after injection into blowflies (L.caesar) (PubMed:32182430). In most cases is not lethal 24 hours after injection, but paralysis is irreversible (PubMed:32182430). May have antimicrobial properties, like most ant linear peptides (By similarity).</text>
</comment>
<comment type="subcellular location">
    <subcellularLocation>
        <location evidence="3">Secreted</location>
    </subcellularLocation>
</comment>
<comment type="tissue specificity">
    <text evidence="3">Expressed by the venom gland.</text>
</comment>
<comment type="mass spectrometry"/>
<comment type="toxic dose">
    <text evidence="3">PD(50) is 10.53 +-1.7 nmol/g in blowfly (L.caesar) (at 1 hour post-injection).</text>
</comment>
<comment type="toxic dose">
    <text evidence="3">PD(50) is 29.25 +-2.0 nmol/g in blowfly (L.caesar) (at 24 hours post-injection).</text>
</comment>
<comment type="similarity">
    <text evidence="5">Belongs to the formicidae venom precursor-01 superfamily.</text>
</comment>
<feature type="signal peptide" evidence="2">
    <location>
        <begin position="1"/>
        <end position="26"/>
    </location>
</feature>
<feature type="propeptide" id="PRO_0000453063" evidence="6">
    <location>
        <begin position="27"/>
        <end position="52"/>
    </location>
</feature>
<feature type="peptide" id="PRO_0000453064" description="U10-myrmicitoxin-Mri1c" evidence="3">
    <location>
        <begin position="53"/>
        <end position="81"/>
    </location>
</feature>
<feature type="modified residue" description="Isoleucine amide" evidence="6">
    <location>
        <position position="81"/>
    </location>
</feature>
<protein>
    <recommendedName>
        <fullName evidence="4">U10-myrmicitoxin-Mri1c</fullName>
        <shortName evidence="4">U10-MYRTX-Mri1c</shortName>
    </recommendedName>
</protein>
<evidence type="ECO:0000250" key="1">
    <source>
        <dbReference type="UniProtKB" id="Q07932"/>
    </source>
</evidence>
<evidence type="ECO:0000255" key="2"/>
<evidence type="ECO:0000269" key="3">
    <source>
    </source>
</evidence>
<evidence type="ECO:0000303" key="4">
    <source>
    </source>
</evidence>
<evidence type="ECO:0000305" key="5"/>
<evidence type="ECO:0000305" key="6">
    <source>
    </source>
</evidence>
<evidence type="ECO:0000312" key="7">
    <source>
        <dbReference type="EMBL" id="QIQ51445.1"/>
    </source>
</evidence>